<name>DEL1A_HOTJU</name>
<evidence type="ECO:0000255" key="1">
    <source>
        <dbReference type="PROSITE-ProRule" id="PRU01210"/>
    </source>
</evidence>
<evidence type="ECO:0000269" key="2">
    <source>
    </source>
</evidence>
<evidence type="ECO:0000303" key="3">
    <source>
    </source>
</evidence>
<evidence type="ECO:0000305" key="4"/>
<evidence type="ECO:0000305" key="5">
    <source>
    </source>
</evidence>
<proteinExistence type="evidence at protein level"/>
<reference key="1">
    <citation type="journal article" date="2020" name="ACS Pharmacol. Transl. Sci.">
        <title>Venom peptides with dual modulatory activity on the voltage-gated sodium channel Nav1.1 provide novel leads for development of antiepileptic drugs.</title>
        <authorList>
            <person name="Chow C.Y."/>
            <person name="Chin Y.K."/>
            <person name="Walker A.A."/>
            <person name="Guo S."/>
            <person name="Blomster L.V."/>
            <person name="Ward M.J."/>
            <person name="Herzig V."/>
            <person name="Rokyta D.R."/>
            <person name="King G.F."/>
        </authorList>
    </citation>
    <scope>PROTEIN SEQUENCE</scope>
    <scope>FUNCTION</scope>
    <scope>MASS SPECTROMETRY</scope>
    <scope>RECOMBINANT EXPRESSION</scope>
    <scope>SUBCELLULAR LOCATION</scope>
    <scope>STRUCTURE BY NMR</scope>
    <scope>DISULFIDE BOND</scope>
    <scope>TOXIC DOSE</scope>
    <scope>BIOASSAY</scope>
    <source>
        <tissue>Venom</tissue>
        <tissue>Venom gland</tissue>
    </source>
</reference>
<accession>P0DQN8</accession>
<dbReference type="PDB" id="6OHX">
    <property type="method" value="NMR"/>
    <property type="chains" value="A=1-66"/>
</dbReference>
<dbReference type="PDBsum" id="6OHX"/>
<dbReference type="SMR" id="P0DQN8"/>
<dbReference type="GO" id="GO:0005576">
    <property type="term" value="C:extracellular region"/>
    <property type="evidence" value="ECO:0007669"/>
    <property type="project" value="UniProtKB-SubCell"/>
</dbReference>
<dbReference type="GO" id="GO:0019871">
    <property type="term" value="F:sodium channel inhibitor activity"/>
    <property type="evidence" value="ECO:0007669"/>
    <property type="project" value="InterPro"/>
</dbReference>
<dbReference type="GO" id="GO:0090729">
    <property type="term" value="F:toxin activity"/>
    <property type="evidence" value="ECO:0007669"/>
    <property type="project" value="UniProtKB-KW"/>
</dbReference>
<dbReference type="GO" id="GO:0006952">
    <property type="term" value="P:defense response"/>
    <property type="evidence" value="ECO:0007669"/>
    <property type="project" value="InterPro"/>
</dbReference>
<dbReference type="CDD" id="cd23106">
    <property type="entry name" value="neurotoxins_LC_scorpion"/>
    <property type="match status" value="1"/>
</dbReference>
<dbReference type="Gene3D" id="3.30.30.10">
    <property type="entry name" value="Knottin, scorpion toxin-like"/>
    <property type="match status" value="1"/>
</dbReference>
<dbReference type="InterPro" id="IPR044062">
    <property type="entry name" value="LCN-type_CS_alpha_beta_dom"/>
</dbReference>
<dbReference type="InterPro" id="IPR003614">
    <property type="entry name" value="Scorpion_toxin-like"/>
</dbReference>
<dbReference type="InterPro" id="IPR036574">
    <property type="entry name" value="Scorpion_toxin-like_sf"/>
</dbReference>
<dbReference type="InterPro" id="IPR018218">
    <property type="entry name" value="Scorpion_toxinL"/>
</dbReference>
<dbReference type="InterPro" id="IPR002061">
    <property type="entry name" value="Scorpion_toxinL/defensin"/>
</dbReference>
<dbReference type="Pfam" id="PF00537">
    <property type="entry name" value="Toxin_3"/>
    <property type="match status" value="1"/>
</dbReference>
<dbReference type="PRINTS" id="PR00285">
    <property type="entry name" value="SCORPNTOXIN"/>
</dbReference>
<dbReference type="SMART" id="SM00505">
    <property type="entry name" value="Knot1"/>
    <property type="match status" value="1"/>
</dbReference>
<dbReference type="SUPFAM" id="SSF57095">
    <property type="entry name" value="Scorpion toxin-like"/>
    <property type="match status" value="1"/>
</dbReference>
<dbReference type="PROSITE" id="PS51863">
    <property type="entry name" value="LCN_CSAB"/>
    <property type="match status" value="1"/>
</dbReference>
<feature type="chain" id="PRO_0000451604" description="Delta-buthitoxin-Hj1a" evidence="2">
    <location>
        <begin position="1"/>
        <end position="66"/>
    </location>
</feature>
<feature type="domain" description="LCN-type CS-alpha/beta" evidence="1">
    <location>
        <begin position="4"/>
        <end position="66"/>
    </location>
</feature>
<feature type="disulfide bond" evidence="2">
    <location>
        <begin position="14"/>
        <end position="65"/>
    </location>
</feature>
<feature type="disulfide bond" evidence="2">
    <location>
        <begin position="18"/>
        <end position="38"/>
    </location>
</feature>
<feature type="disulfide bond" evidence="2">
    <location>
        <begin position="24"/>
        <end position="48"/>
    </location>
</feature>
<feature type="disulfide bond" evidence="2">
    <location>
        <begin position="28"/>
        <end position="50"/>
    </location>
</feature>
<keyword id="KW-0002">3D-structure</keyword>
<keyword id="KW-0903">Direct protein sequencing</keyword>
<keyword id="KW-1015">Disulfide bond</keyword>
<keyword id="KW-0872">Ion channel impairing toxin</keyword>
<keyword id="KW-0528">Neurotoxin</keyword>
<keyword id="KW-0582">Pharmaceutical</keyword>
<keyword id="KW-0964">Secreted</keyword>
<keyword id="KW-0800">Toxin</keyword>
<keyword id="KW-0738">Voltage-gated sodium channel impairing toxin</keyword>
<sequence length="66" mass="7491">EEVRDAYIAQPHNCVYHCFRDSYCNDLCIKHGAESGECKWFTSSGNACWCVKLPKSEPIKVPGKCH</sequence>
<organism>
    <name type="scientific">Hottentotta judaicus</name>
    <name type="common">Black scorpion</name>
    <name type="synonym">Buthotus judaicus</name>
    <dbReference type="NCBI Taxonomy" id="6863"/>
    <lineage>
        <taxon>Eukaryota</taxon>
        <taxon>Metazoa</taxon>
        <taxon>Ecdysozoa</taxon>
        <taxon>Arthropoda</taxon>
        <taxon>Chelicerata</taxon>
        <taxon>Arachnida</taxon>
        <taxon>Scorpiones</taxon>
        <taxon>Buthida</taxon>
        <taxon>Buthoidea</taxon>
        <taxon>Buthidae</taxon>
        <taxon>Hottentotta</taxon>
    </lineage>
</organism>
<protein>
    <recommendedName>
        <fullName evidence="3">Delta-buthitoxin-Hj1a</fullName>
        <shortName evidence="5">Delta-BUTX-Hj1a</shortName>
    </recommendedName>
</protein>
<comment type="function">
    <text evidence="2">This recombinant toxin slows fast inactivation on Nav1.1/SCN1A (EC(50)=17 nM), Nav1.4/SN4A (EC(50)=7.5 nM), Nav1.5/SCN5A (EC(50)=9.2 nM) and Nav1.6/SCN8A (EC(50)=37.3 nM) voltage-gated sodium channels (PubMed:32259093). On Nav1.1/SCN1A channel, it acts as an agonist by inducing a shift in both the voltage dependence of channel inactivation (alpha-toxin activity) and activation (beta-toxin activity) (PubMed:32259093). In vivo, shows moderate insecticidal activities (PubMed:32259093). It induces irreversible paralysis in blowflies and lethal effects in D.melanogaster (PubMed:32259093).</text>
</comment>
<comment type="subcellular location">
    <subcellularLocation>
        <location evidence="2">Secreted</location>
    </subcellularLocation>
</comment>
<comment type="tissue specificity">
    <text evidence="5">Expressed by the venom gland.</text>
</comment>
<comment type="domain">
    <text evidence="2">Has the structural arrangement of an alpha-helix connected to antiparallel beta-sheets by disulfide bonds (CS-alpha/beta).</text>
</comment>
<comment type="mass spectrometry" mass="7476.3" method="Electrospray" evidence="2">
    <text>Monoisotopic mass.</text>
</comment>
<comment type="toxic dose">
    <text evidence="2">LD(50) of the recombinant toxin is 745 +- 108 pmol/g on D.melanogaster.</text>
</comment>
<comment type="toxic dose">
    <text evidence="2">LD(50) of the native toxin is 914 +- 138 pmol/g on D.melanogaster.</text>
</comment>
<comment type="pharmaceutical">
    <text evidence="5">Lead molecule for the development of selective Nav1.1/SCN1A agonists for the treatment of Dravet syndrome epilepsy.</text>
</comment>
<comment type="miscellaneous">
    <text evidence="2">Negative results: shows very weak activity on Nav1.2/SCN2A, Nav1.3/SCN3A, and Nav1.7/SCN9A voltage-gated sodium channels.</text>
</comment>
<comment type="miscellaneous">
    <text evidence="5">The complete amino acid sequence was obtained by combining proteomic and transcriptomic techniques.</text>
</comment>
<comment type="similarity">
    <text evidence="4">Belongs to the long (4 C-C) scorpion toxin superfamily. Sodium channel inhibitor family. Alpha subfamily.</text>
</comment>